<dbReference type="EC" id="1.1.1.1" evidence="2"/>
<dbReference type="EC" id="1.1.1.4" evidence="2"/>
<dbReference type="EC" id="1.2.1.3" evidence="2"/>
<dbReference type="EMBL" id="J03362">
    <property type="protein sequence ID" value="AAA21953.1"/>
    <property type="molecule type" value="Genomic_DNA"/>
</dbReference>
<dbReference type="PIR" id="A30196">
    <property type="entry name" value="A30196"/>
</dbReference>
<dbReference type="SMR" id="P14940"/>
<dbReference type="GO" id="GO:0000721">
    <property type="term" value="F:(R,R)-butanediol dehydrogenase activity"/>
    <property type="evidence" value="ECO:0007669"/>
    <property type="project" value="UniProtKB-EC"/>
</dbReference>
<dbReference type="GO" id="GO:0004022">
    <property type="term" value="F:alcohol dehydrogenase (NAD+) activity"/>
    <property type="evidence" value="ECO:0007669"/>
    <property type="project" value="UniProtKB-EC"/>
</dbReference>
<dbReference type="GO" id="GO:0004029">
    <property type="term" value="F:aldehyde dehydrogenase (NAD+) activity"/>
    <property type="evidence" value="ECO:0007669"/>
    <property type="project" value="UniProtKB-EC"/>
</dbReference>
<dbReference type="GO" id="GO:0008270">
    <property type="term" value="F:zinc ion binding"/>
    <property type="evidence" value="ECO:0007669"/>
    <property type="project" value="InterPro"/>
</dbReference>
<dbReference type="CDD" id="cd08285">
    <property type="entry name" value="NADP_ADH"/>
    <property type="match status" value="1"/>
</dbReference>
<dbReference type="Gene3D" id="3.90.180.10">
    <property type="entry name" value="Medium-chain alcohol dehydrogenases, catalytic domain"/>
    <property type="match status" value="1"/>
</dbReference>
<dbReference type="Gene3D" id="3.40.50.720">
    <property type="entry name" value="NAD(P)-binding Rossmann-like Domain"/>
    <property type="match status" value="1"/>
</dbReference>
<dbReference type="InterPro" id="IPR013149">
    <property type="entry name" value="ADH-like_C"/>
</dbReference>
<dbReference type="InterPro" id="IPR013154">
    <property type="entry name" value="ADH-like_N"/>
</dbReference>
<dbReference type="InterPro" id="IPR002328">
    <property type="entry name" value="ADH_Zn_CS"/>
</dbReference>
<dbReference type="InterPro" id="IPR011032">
    <property type="entry name" value="GroES-like_sf"/>
</dbReference>
<dbReference type="InterPro" id="IPR036291">
    <property type="entry name" value="NAD(P)-bd_dom_sf"/>
</dbReference>
<dbReference type="InterPro" id="IPR020843">
    <property type="entry name" value="PKS_ER"/>
</dbReference>
<dbReference type="PANTHER" id="PTHR42813:SF4">
    <property type="entry name" value="NADP-DEPENDENT ISOPROPANOL DEHYDROGENASE"/>
    <property type="match status" value="1"/>
</dbReference>
<dbReference type="PANTHER" id="PTHR42813">
    <property type="entry name" value="ZINC-TYPE ALCOHOL DEHYDROGENASE-LIKE"/>
    <property type="match status" value="1"/>
</dbReference>
<dbReference type="Pfam" id="PF08240">
    <property type="entry name" value="ADH_N"/>
    <property type="match status" value="1"/>
</dbReference>
<dbReference type="Pfam" id="PF00107">
    <property type="entry name" value="ADH_zinc_N"/>
    <property type="match status" value="1"/>
</dbReference>
<dbReference type="SMART" id="SM00829">
    <property type="entry name" value="PKS_ER"/>
    <property type="match status" value="1"/>
</dbReference>
<dbReference type="SUPFAM" id="SSF50129">
    <property type="entry name" value="GroES-like"/>
    <property type="match status" value="1"/>
</dbReference>
<dbReference type="SUPFAM" id="SSF51735">
    <property type="entry name" value="NAD(P)-binding Rossmann-fold domains"/>
    <property type="match status" value="1"/>
</dbReference>
<dbReference type="PROSITE" id="PS00059">
    <property type="entry name" value="ADH_ZINC"/>
    <property type="match status" value="1"/>
</dbReference>
<keyword id="KW-0479">Metal-binding</keyword>
<keyword id="KW-0520">NAD</keyword>
<keyword id="KW-0560">Oxidoreductase</keyword>
<keyword id="KW-0862">Zinc</keyword>
<feature type="initiator methionine" description="Removed" evidence="1">
    <location>
        <position position="1"/>
    </location>
</feature>
<feature type="chain" id="PRO_0000160747" description="Alcohol dehydrogenase">
    <location>
        <begin position="2"/>
        <end position="366"/>
    </location>
</feature>
<feature type="binding site" evidence="1">
    <location>
        <position position="41"/>
    </location>
    <ligand>
        <name>Zn(2+)</name>
        <dbReference type="ChEBI" id="CHEBI:29105"/>
        <note>catalytic</note>
    </ligand>
</feature>
<feature type="binding site" evidence="1">
    <location>
        <position position="62"/>
    </location>
    <ligand>
        <name>Zn(2+)</name>
        <dbReference type="ChEBI" id="CHEBI:29105"/>
        <note>catalytic</note>
    </ligand>
</feature>
<feature type="binding site" evidence="1">
    <location>
        <position position="63"/>
    </location>
    <ligand>
        <name>Zn(2+)</name>
        <dbReference type="ChEBI" id="CHEBI:29105"/>
        <note>catalytic</note>
    </ligand>
</feature>
<feature type="binding site" evidence="1">
    <location>
        <position position="167"/>
    </location>
    <ligand>
        <name>Zn(2+)</name>
        <dbReference type="ChEBI" id="CHEBI:29105"/>
        <note>catalytic</note>
    </ligand>
</feature>
<protein>
    <recommendedName>
        <fullName>Alcohol dehydrogenase</fullName>
        <ecNumber evidence="2">1.1.1.1</ecNumber>
        <ecNumber evidence="2">1.1.1.4</ecNumber>
        <ecNumber evidence="2">1.2.1.3</ecNumber>
    </recommendedName>
</protein>
<proteinExistence type="inferred from homology"/>
<reference key="1">
    <citation type="journal article" date="1988" name="J. Bacteriol.">
        <title>Alcohol dehydrogenase gene from Alcaligenes eutrophus: subcloning, heterologous expression in Escherichia coli, sequencing, and location of Tn5 insertions.</title>
        <authorList>
            <person name="Jendrossek D."/>
            <person name="Steinbuechel A."/>
            <person name="Schlegel H.G."/>
        </authorList>
    </citation>
    <scope>NUCLEOTIDE SEQUENCE [GENOMIC DNA]</scope>
</reference>
<sequence length="366" mass="38566">MTAMMKAAVFVEPGRIELADKPIPDIGPNDALVRITTTTICGTDVHILKGEYPVAKGLTVGHEPVGIIEKLGSAVTGYREGQRVIAGAICPNFNSYAAQDGVASQDGSYLMASGQCGCHGYKATAGWRFGNMIDGTQAEYVLVPDAQANLTPIPDGLTDEQVLMCPDIMSTGFKGAENANIRIGHTVAVFAQGPIGLCATAGARLCGATTIIAIDGNDHRLEIARKMGADVVLNFRNCDVVDEVMKLTGGRGVDASIEALGTQATFEQSLRVLKPGGTLSSLGVYSSDLTIPLSAFAAGLGDHKINTALCPGGKERMRRLINVIESGRVDLGALVTHQYRLDDIVAAYDLFANQRDGVLKIAIKPH</sequence>
<evidence type="ECO:0000250" key="1"/>
<evidence type="ECO:0000250" key="2">
    <source>
        <dbReference type="UniProtKB" id="Q0KDL6"/>
    </source>
</evidence>
<evidence type="ECO:0000305" key="3"/>
<comment type="function">
    <text evidence="2">Multifunctional alcohol dehydrogenase exhibiting NAD(+)-dependent dehydrogenase activities for 2,3-butanediol, ethanol and acetaldehyde, and reductase activities for acetoin (NADH-dependent), and diacetyl and acetaldehyde (independently of whether NADH or NADPH is the reductant). The rate of oxidation of 2,3-butanediol is much higher than for the oxidation of ethanol. Has acetaldehyde dehydrogenase activity leading to acetate formation. May function in the release of excess reducing power in the absence of exogenous hydrogen acceptors such as oxygen.</text>
</comment>
<comment type="catalytic activity">
    <reaction evidence="2">
        <text>a primary alcohol + NAD(+) = an aldehyde + NADH + H(+)</text>
        <dbReference type="Rhea" id="RHEA:10736"/>
        <dbReference type="ChEBI" id="CHEBI:15378"/>
        <dbReference type="ChEBI" id="CHEBI:15734"/>
        <dbReference type="ChEBI" id="CHEBI:17478"/>
        <dbReference type="ChEBI" id="CHEBI:57540"/>
        <dbReference type="ChEBI" id="CHEBI:57945"/>
        <dbReference type="EC" id="1.1.1.1"/>
    </reaction>
</comment>
<comment type="catalytic activity">
    <reaction evidence="2">
        <text>a secondary alcohol + NAD(+) = a ketone + NADH + H(+)</text>
        <dbReference type="Rhea" id="RHEA:10740"/>
        <dbReference type="ChEBI" id="CHEBI:15378"/>
        <dbReference type="ChEBI" id="CHEBI:17087"/>
        <dbReference type="ChEBI" id="CHEBI:35681"/>
        <dbReference type="ChEBI" id="CHEBI:57540"/>
        <dbReference type="ChEBI" id="CHEBI:57945"/>
        <dbReference type="EC" id="1.1.1.1"/>
    </reaction>
</comment>
<comment type="catalytic activity">
    <reaction evidence="2">
        <text>(R,R)-butane-2,3-diol + NAD(+) = (R)-acetoin + NADH + H(+)</text>
        <dbReference type="Rhea" id="RHEA:24340"/>
        <dbReference type="ChEBI" id="CHEBI:15378"/>
        <dbReference type="ChEBI" id="CHEBI:15686"/>
        <dbReference type="ChEBI" id="CHEBI:16982"/>
        <dbReference type="ChEBI" id="CHEBI:57540"/>
        <dbReference type="ChEBI" id="CHEBI:57945"/>
        <dbReference type="EC" id="1.1.1.4"/>
    </reaction>
</comment>
<comment type="catalytic activity">
    <reaction evidence="2">
        <text>an aldehyde + NAD(+) + H2O = a carboxylate + NADH + 2 H(+)</text>
        <dbReference type="Rhea" id="RHEA:16185"/>
        <dbReference type="ChEBI" id="CHEBI:15377"/>
        <dbReference type="ChEBI" id="CHEBI:15378"/>
        <dbReference type="ChEBI" id="CHEBI:17478"/>
        <dbReference type="ChEBI" id="CHEBI:29067"/>
        <dbReference type="ChEBI" id="CHEBI:57540"/>
        <dbReference type="ChEBI" id="CHEBI:57945"/>
        <dbReference type="EC" id="1.2.1.3"/>
    </reaction>
</comment>
<comment type="cofactor">
    <cofactor evidence="1">
        <name>Zn(2+)</name>
        <dbReference type="ChEBI" id="CHEBI:29105"/>
    </cofactor>
    <text evidence="1">Binds 1 zinc ion per subunit.</text>
</comment>
<comment type="subunit">
    <text evidence="1">Homotetramer.</text>
</comment>
<comment type="similarity">
    <text evidence="3">Belongs to the zinc-containing alcohol dehydrogenase family.</text>
</comment>
<gene>
    <name type="primary">adh</name>
</gene>
<organism>
    <name type="scientific">Cupriavidus necator</name>
    <name type="common">Alcaligenes eutrophus</name>
    <name type="synonym">Ralstonia eutropha</name>
    <dbReference type="NCBI Taxonomy" id="106590"/>
    <lineage>
        <taxon>Bacteria</taxon>
        <taxon>Pseudomonadati</taxon>
        <taxon>Pseudomonadota</taxon>
        <taxon>Betaproteobacteria</taxon>
        <taxon>Burkholderiales</taxon>
        <taxon>Burkholderiaceae</taxon>
        <taxon>Cupriavidus</taxon>
    </lineage>
</organism>
<name>ADH_CUPNE</name>
<accession>P14940</accession>